<proteinExistence type="evidence at protein level"/>
<reference evidence="13 14" key="1">
    <citation type="journal article" date="1997" name="Cell">
        <title>MARK - a novel family of protein kinases that phosphorylate microtubule-associated proteins and trigger microtubule disruption.</title>
        <authorList>
            <person name="Drewes G."/>
            <person name="Ebneth A."/>
            <person name="Preuss U."/>
            <person name="Mandelkow E.-M."/>
            <person name="Mandelkow E."/>
        </authorList>
    </citation>
    <scope>NUCLEOTIDE SEQUENCE [MRNA]</scope>
    <scope>FUNCTION</scope>
    <scope>TISSUE SPECIFICITY</scope>
    <scope>SUBCELLULAR LOCATION</scope>
    <scope>PHOSPHORYLATION AT THR-215 AND SER-219</scope>
    <scope>MUTAGENESIS OF LYS-89; THR-215 AND SER-219</scope>
    <source>
        <strain evidence="14">Sprague-Dawley</strain>
        <tissue evidence="14">Brain</tissue>
    </source>
</reference>
<reference key="2">
    <citation type="journal article" date="2003" name="EMBO J.">
        <title>MARKK, a Ste20-like kinase, activates the polarity-inducing kinase MARK/PAR-1.</title>
        <authorList>
            <person name="Timm T."/>
            <person name="Li X.Y."/>
            <person name="Biernat J."/>
            <person name="Jiao J."/>
            <person name="Mandelkow E."/>
            <person name="Vandekerckhove J."/>
            <person name="Mandelkow E.M."/>
        </authorList>
    </citation>
    <scope>FUNCTION</scope>
    <scope>ACTIVITY REGULATION</scope>
    <scope>PHOSPHORYLATION AT THR-215 AND SER-219</scope>
    <scope>MUTAGENESIS OF THR-215 AND SER-219</scope>
</reference>
<reference key="3">
    <citation type="journal article" date="2004" name="Neuron">
        <title>Doublecortin microtubule affinity is regulated by a balance of kinase and phosphatase activity at the leading edge of migrating neurons.</title>
        <authorList>
            <person name="Schaar B.T."/>
            <person name="Kinoshita K."/>
            <person name="McConnell S.K."/>
        </authorList>
    </citation>
    <scope>FUNCTION IN PHOSPHORYLATION OF DCX</scope>
</reference>
<reference key="4">
    <citation type="journal article" date="2012" name="Nat. Commun.">
        <title>Quantitative maps of protein phosphorylation sites across 14 different rat organs and tissues.</title>
        <authorList>
            <person name="Lundby A."/>
            <person name="Secher A."/>
            <person name="Lage K."/>
            <person name="Nordsborg N.B."/>
            <person name="Dmytriyev A."/>
            <person name="Lundby C."/>
            <person name="Olsen J.V."/>
        </authorList>
    </citation>
    <scope>PHOSPHORYLATION [LARGE SCALE ANALYSIS] AT SER-444</scope>
    <scope>IDENTIFICATION BY MASS SPECTROMETRY [LARGE SCALE ANALYSIS]</scope>
</reference>
<accession>O08678</accession>
<evidence type="ECO:0000250" key="1"/>
<evidence type="ECO:0000250" key="2">
    <source>
        <dbReference type="UniProtKB" id="Q8VHJ5"/>
    </source>
</evidence>
<evidence type="ECO:0000250" key="3">
    <source>
        <dbReference type="UniProtKB" id="Q9H0K1"/>
    </source>
</evidence>
<evidence type="ECO:0000250" key="4">
    <source>
        <dbReference type="UniProtKB" id="Q9P0L2"/>
    </source>
</evidence>
<evidence type="ECO:0000255" key="5">
    <source>
        <dbReference type="PROSITE-ProRule" id="PRU00159"/>
    </source>
</evidence>
<evidence type="ECO:0000255" key="6">
    <source>
        <dbReference type="PROSITE-ProRule" id="PRU00212"/>
    </source>
</evidence>
<evidence type="ECO:0000255" key="7">
    <source>
        <dbReference type="PROSITE-ProRule" id="PRU00565"/>
    </source>
</evidence>
<evidence type="ECO:0000255" key="8">
    <source>
        <dbReference type="PROSITE-ProRule" id="PRU10027"/>
    </source>
</evidence>
<evidence type="ECO:0000256" key="9">
    <source>
        <dbReference type="SAM" id="MobiDB-lite"/>
    </source>
</evidence>
<evidence type="ECO:0000269" key="10">
    <source>
    </source>
</evidence>
<evidence type="ECO:0000269" key="11">
    <source>
    </source>
</evidence>
<evidence type="ECO:0000269" key="12">
    <source>
    </source>
</evidence>
<evidence type="ECO:0000305" key="13"/>
<evidence type="ECO:0000312" key="14">
    <source>
        <dbReference type="EMBL" id="CAB06294.1"/>
    </source>
</evidence>
<evidence type="ECO:0000312" key="15">
    <source>
        <dbReference type="RGD" id="619882"/>
    </source>
</evidence>
<evidence type="ECO:0007744" key="16">
    <source>
    </source>
</evidence>
<gene>
    <name evidence="15" type="primary">Mark1</name>
</gene>
<sequence>MSARTPLPTVNERDTENHTSVDGYTETHIPPTKSSSRQNIPRCRNSITSATDEQPHIGNYRLQKTIGKGNFAKVKLARHVLTGREVAVKIIDKTQLNPTSLQKLFREVRIMKILNHPNIVKLFEVIETEKTLYLVMEYASGGEVFDYLVAHGRMKEKEARAKFRQIVSAVQYCHQKCIVHRDLKAENLLLDADMNIKIADFGFSNEFTVGNKLDTFCGSPPYAAPELFQGKKYDGPEVDVWSLGVILYTLVSGSLPFDGQNLKELRERVLRGKYRVPFYMSTDCENLLKKLLVLNPIKRGSLEQIMKDRWMNVGHEEEELKPYSEPELDLNDAKRIDIMVTMGFARDEINDALVSQKYDEVMATYILLGRKPPEFEGGESLSSGNLCQRSRPSSDLNNSTLQSPAHLKVQRSISANQKQRRFSDHAGPSIPPAVSYTKRPQANSVESEQKEEWDKDTARRLGSTTVGSKSEVTASPLVGPDRKKSSAGPSNNVYSGGSMTRRNTYVCERSTDRYAALQNGRDSSLTEMSASSMSSTGSTVASAGPSARPRHQKSMSTSGHPIKVTLPTIKDGSEAYRPGTAQRVPAASPSAHSISASTPDRTRFPRGSSSRSTFHGEQLRERRSAAYSGPPASPSHDTAALAHARRGTSTGIISKITSKFVRRDPSEGEASGRTDTARGSSGEPKDKEEGKEAKPRSLRFTWSMKTTSSMDPNDMVREIRKVLDANTCDYEQRERFLLFCVHGDARQDSLVQWEMEVCKLPRLSLNGVRFKRISGTSIAFKNIASKIANELKL</sequence>
<comment type="function">
    <text evidence="4 10 11 12">Serine/threonine-protein kinase (By similarity). Involved in cell polarity and microtubule dynamics regulation. Phosphorylates DCX, MAP2 and MAP4. Phosphorylates the microtubule-associated protein MAPT/TAU (By similarity). Involved in cell polarity by phosphorylating the microtubule-associated proteins MAP2, MAP4 and MAPT/TAU at KXGS motifs, causing detachment from microtubules, and their disassembly. Involved in the regulation of neuronal migration through its dual activities in regulating cellular polarity and microtubule dynamics, possibly by phosphorylating and regulating DCX. Also acts as a positive regulator of the Wnt signaling pathway, probably by mediating phosphorylation of dishevelled proteins (DVL1, DVL2 and/or DVL3) (PubMed:14517247, PubMed:14741102, PubMed:9108484).</text>
</comment>
<comment type="catalytic activity">
    <reaction evidence="12">
        <text>L-seryl-[protein] + ATP = O-phospho-L-seryl-[protein] + ADP + H(+)</text>
        <dbReference type="Rhea" id="RHEA:17989"/>
        <dbReference type="Rhea" id="RHEA-COMP:9863"/>
        <dbReference type="Rhea" id="RHEA-COMP:11604"/>
        <dbReference type="ChEBI" id="CHEBI:15378"/>
        <dbReference type="ChEBI" id="CHEBI:29999"/>
        <dbReference type="ChEBI" id="CHEBI:30616"/>
        <dbReference type="ChEBI" id="CHEBI:83421"/>
        <dbReference type="ChEBI" id="CHEBI:456216"/>
        <dbReference type="EC" id="2.7.11.1"/>
    </reaction>
</comment>
<comment type="catalytic activity">
    <reaction evidence="12">
        <text>L-threonyl-[protein] + ATP = O-phospho-L-threonyl-[protein] + ADP + H(+)</text>
        <dbReference type="Rhea" id="RHEA:46608"/>
        <dbReference type="Rhea" id="RHEA-COMP:11060"/>
        <dbReference type="Rhea" id="RHEA-COMP:11605"/>
        <dbReference type="ChEBI" id="CHEBI:15378"/>
        <dbReference type="ChEBI" id="CHEBI:30013"/>
        <dbReference type="ChEBI" id="CHEBI:30616"/>
        <dbReference type="ChEBI" id="CHEBI:61977"/>
        <dbReference type="ChEBI" id="CHEBI:456216"/>
        <dbReference type="EC" id="2.7.11.1"/>
    </reaction>
</comment>
<comment type="catalytic activity">
    <reaction>
        <text>L-seryl-[tau protein] + ATP = O-phospho-L-seryl-[tau protein] + ADP + H(+)</text>
        <dbReference type="Rhea" id="RHEA:12801"/>
        <dbReference type="Rhea" id="RHEA-COMP:13701"/>
        <dbReference type="Rhea" id="RHEA-COMP:13702"/>
        <dbReference type="ChEBI" id="CHEBI:15378"/>
        <dbReference type="ChEBI" id="CHEBI:29999"/>
        <dbReference type="ChEBI" id="CHEBI:30616"/>
        <dbReference type="ChEBI" id="CHEBI:83421"/>
        <dbReference type="ChEBI" id="CHEBI:456216"/>
        <dbReference type="EC" id="2.7.11.26"/>
    </reaction>
</comment>
<comment type="catalytic activity">
    <reaction>
        <text>L-threonyl-[tau protein] + ATP = O-phospho-L-threonyl-[tau protein] + ADP + H(+)</text>
        <dbReference type="Rhea" id="RHEA:53904"/>
        <dbReference type="Rhea" id="RHEA-COMP:13703"/>
        <dbReference type="Rhea" id="RHEA-COMP:13704"/>
        <dbReference type="ChEBI" id="CHEBI:15378"/>
        <dbReference type="ChEBI" id="CHEBI:30013"/>
        <dbReference type="ChEBI" id="CHEBI:30616"/>
        <dbReference type="ChEBI" id="CHEBI:61977"/>
        <dbReference type="ChEBI" id="CHEBI:456216"/>
        <dbReference type="EC" id="2.7.11.26"/>
    </reaction>
</comment>
<comment type="cofactor">
    <cofactor evidence="1">
        <name>Mg(2+)</name>
        <dbReference type="ChEBI" id="CHEBI:18420"/>
    </cofactor>
</comment>
<comment type="activity regulation">
    <text evidence="10">Activated by phosphorylation on Thr-215. Inhibited by phosphorylation at Ser-219.</text>
</comment>
<comment type="subunit">
    <text evidence="4">Interacts with MAPT/TAU.</text>
</comment>
<comment type="subcellular location">
    <subcellularLocation>
        <location evidence="1">Cell membrane</location>
        <topology evidence="1">Peripheral membrane protein</topology>
    </subcellularLocation>
    <subcellularLocation>
        <location evidence="12">Cytoplasm</location>
        <location evidence="12">Cytoskeleton</location>
    </subcellularLocation>
    <subcellularLocation>
        <location evidence="4">Cytoplasm</location>
    </subcellularLocation>
    <subcellularLocation>
        <location evidence="4">Cell projection</location>
        <location evidence="4">Dendrite</location>
    </subcellularLocation>
    <text>Appears to localize to an intracellular network.</text>
</comment>
<comment type="tissue specificity">
    <text evidence="12">Highly expressed in brain and spleen and at lower levels in kidney and skeletal muscle.</text>
</comment>
<comment type="domain">
    <text evidence="1">The UBA domain does not seem to bind ubiquitin and ubiquitin-like and might play a role in regulating the enzyme conformation and localization. Activation of the kinase activity following phosphorylation at Thr-208 is accompanied by a conformational change that alters the orientation of the UBA domain with respect to the catalytic domain (By similarity).</text>
</comment>
<comment type="domain">
    <text evidence="1">The KA1 domain mediates binding to phospholipids and targeting to membranes. Binds phosphatidic acid (PA), phosphatidylserine (PtdSer) and phosphatidylinositol 4,5-bisphosphate (PtdIns(4,5)P2) (By similarity).</text>
</comment>
<comment type="PTM">
    <text evidence="1 10 12">Phosphorylation at Thr-613 by PRKCZ/aPKC in polarized epithelial cells inhibits the kinase activity (By similarity). Phosphorylated at Thr-215 by STK11/LKB1 in complex with STE20-related adapter-alpha (STRADA) pseudo kinase and CAB39. Phosphorylation at Thr-215 by TAOK1 activates the kinase activity, leading to phosphorylation and detachment of MAPT/TAU from microtubules. Phosphorylation at Ser-219 by GSK3-beta (GSK3B) inhibits the kinase activity.</text>
</comment>
<comment type="similarity">
    <text evidence="13">Belongs to the protein kinase superfamily. CAMK Ser/Thr protein kinase family. SNF1 subfamily.</text>
</comment>
<name>MARK1_RAT</name>
<keyword id="KW-0067">ATP-binding</keyword>
<keyword id="KW-1003">Cell membrane</keyword>
<keyword id="KW-0966">Cell projection</keyword>
<keyword id="KW-0963">Cytoplasm</keyword>
<keyword id="KW-0206">Cytoskeleton</keyword>
<keyword id="KW-0418">Kinase</keyword>
<keyword id="KW-0446">Lipid-binding</keyword>
<keyword id="KW-0460">Magnesium</keyword>
<keyword id="KW-0472">Membrane</keyword>
<keyword id="KW-0479">Metal-binding</keyword>
<keyword id="KW-0547">Nucleotide-binding</keyword>
<keyword id="KW-0597">Phosphoprotein</keyword>
<keyword id="KW-1185">Reference proteome</keyword>
<keyword id="KW-0723">Serine/threonine-protein kinase</keyword>
<keyword id="KW-0808">Transferase</keyword>
<keyword id="KW-0879">Wnt signaling pathway</keyword>
<protein>
    <recommendedName>
        <fullName>Serine/threonine-protein kinase MARK1</fullName>
        <ecNumber>2.7.11.1</ecNumber>
        <ecNumber>2.7.11.26</ecNumber>
    </recommendedName>
    <alternativeName>
        <fullName>MAP/microtubule affinity-regulating kinase 1</fullName>
    </alternativeName>
</protein>
<organism>
    <name type="scientific">Rattus norvegicus</name>
    <name type="common">Rat</name>
    <dbReference type="NCBI Taxonomy" id="10116"/>
    <lineage>
        <taxon>Eukaryota</taxon>
        <taxon>Metazoa</taxon>
        <taxon>Chordata</taxon>
        <taxon>Craniata</taxon>
        <taxon>Vertebrata</taxon>
        <taxon>Euteleostomi</taxon>
        <taxon>Mammalia</taxon>
        <taxon>Eutheria</taxon>
        <taxon>Euarchontoglires</taxon>
        <taxon>Glires</taxon>
        <taxon>Rodentia</taxon>
        <taxon>Myomorpha</taxon>
        <taxon>Muroidea</taxon>
        <taxon>Muridae</taxon>
        <taxon>Murinae</taxon>
        <taxon>Rattus</taxon>
    </lineage>
</organism>
<feature type="chain" id="PRO_0000086300" description="Serine/threonine-protein kinase MARK1">
    <location>
        <begin position="1"/>
        <end position="793"/>
    </location>
</feature>
<feature type="domain" description="Protein kinase" evidence="5">
    <location>
        <begin position="60"/>
        <end position="311"/>
    </location>
</feature>
<feature type="domain" description="UBA" evidence="6">
    <location>
        <begin position="329"/>
        <end position="370"/>
    </location>
</feature>
<feature type="domain" description="KA1" evidence="7">
    <location>
        <begin position="744"/>
        <end position="793"/>
    </location>
</feature>
<feature type="region of interest" description="Disordered" evidence="9">
    <location>
        <begin position="1"/>
        <end position="40"/>
    </location>
</feature>
<feature type="region of interest" description="Disordered" evidence="9">
    <location>
        <begin position="377"/>
        <end position="499"/>
    </location>
</feature>
<feature type="region of interest" description="Disordered" evidence="9">
    <location>
        <begin position="517"/>
        <end position="697"/>
    </location>
</feature>
<feature type="compositionally biased region" description="Polar residues" evidence="9">
    <location>
        <begin position="380"/>
        <end position="403"/>
    </location>
</feature>
<feature type="compositionally biased region" description="Basic and acidic residues" evidence="9">
    <location>
        <begin position="447"/>
        <end position="459"/>
    </location>
</feature>
<feature type="compositionally biased region" description="Polar residues" evidence="9">
    <location>
        <begin position="462"/>
        <end position="473"/>
    </location>
</feature>
<feature type="compositionally biased region" description="Polar residues" evidence="9">
    <location>
        <begin position="487"/>
        <end position="499"/>
    </location>
</feature>
<feature type="compositionally biased region" description="Low complexity" evidence="9">
    <location>
        <begin position="523"/>
        <end position="547"/>
    </location>
</feature>
<feature type="compositionally biased region" description="Low complexity" evidence="9">
    <location>
        <begin position="585"/>
        <end position="599"/>
    </location>
</feature>
<feature type="compositionally biased region" description="Polar residues" evidence="9">
    <location>
        <begin position="647"/>
        <end position="657"/>
    </location>
</feature>
<feature type="compositionally biased region" description="Basic and acidic residues" evidence="9">
    <location>
        <begin position="661"/>
        <end position="676"/>
    </location>
</feature>
<feature type="compositionally biased region" description="Basic and acidic residues" evidence="9">
    <location>
        <begin position="683"/>
        <end position="695"/>
    </location>
</feature>
<feature type="active site" description="Proton acceptor" evidence="3 5 8">
    <location>
        <position position="182"/>
    </location>
</feature>
<feature type="binding site" evidence="3 5">
    <location>
        <begin position="66"/>
        <end position="74"/>
    </location>
    <ligand>
        <name>ATP</name>
        <dbReference type="ChEBI" id="CHEBI:30616"/>
    </ligand>
</feature>
<feature type="binding site" evidence="5 12">
    <location>
        <position position="89"/>
    </location>
    <ligand>
        <name>ATP</name>
        <dbReference type="ChEBI" id="CHEBI:30616"/>
    </ligand>
</feature>
<feature type="modified residue" description="Phosphothreonine" evidence="4">
    <location>
        <position position="5"/>
    </location>
</feature>
<feature type="modified residue" description="Phosphothreonine" evidence="4">
    <location>
        <position position="208"/>
    </location>
</feature>
<feature type="modified residue" description="Phosphothreonine; by LKB1 and TAOK1" evidence="10 12">
    <location>
        <position position="215"/>
    </location>
</feature>
<feature type="modified residue" description="Phosphoserine; by GSK3-beta" evidence="10 12">
    <location>
        <position position="219"/>
    </location>
</feature>
<feature type="modified residue" description="Phosphoserine" evidence="2">
    <location>
        <position position="382"/>
    </location>
</feature>
<feature type="modified residue" description="Phosphoserine" evidence="2">
    <location>
        <position position="390"/>
    </location>
</feature>
<feature type="modified residue" description="Phosphoserine" evidence="2">
    <location>
        <position position="393"/>
    </location>
</feature>
<feature type="modified residue" description="Phosphoserine" evidence="4">
    <location>
        <position position="403"/>
    </location>
</feature>
<feature type="modified residue" description="Phosphoserine" evidence="2">
    <location>
        <position position="423"/>
    </location>
</feature>
<feature type="modified residue" description="Phosphoserine" evidence="16">
    <location>
        <position position="444"/>
    </location>
</feature>
<feature type="modified residue" description="Phosphoserine" evidence="2">
    <location>
        <position position="475"/>
    </location>
</feature>
<feature type="modified residue" description="Phosphoserine" evidence="4">
    <location>
        <position position="588"/>
    </location>
</feature>
<feature type="modified residue" description="Phosphothreonine; by PKC/PRKCZ" evidence="1">
    <location>
        <position position="613"/>
    </location>
</feature>
<feature type="modified residue" description="Phosphoserine" evidence="2">
    <location>
        <position position="666"/>
    </location>
</feature>
<feature type="mutagenesis site" description="Loss of kinase activity." evidence="12">
    <original>K</original>
    <variation>R</variation>
    <location>
        <position position="89"/>
    </location>
</feature>
<feature type="mutagenesis site" description="Abolishes activation of serine/threonine-protein kinase activity and only basal activity remains." evidence="10 12">
    <original>T</original>
    <variation>A</variation>
    <location>
        <position position="215"/>
    </location>
</feature>
<feature type="mutagenesis site" description="Loss of kinase activity." evidence="10 12">
    <original>T</original>
    <variation>A</variation>
    <location>
        <position position="215"/>
    </location>
</feature>
<feature type="mutagenesis site" description="Induces an increase of the basal serine/threonine-protein kinase activity." evidence="10 12">
    <original>T</original>
    <variation>E</variation>
    <location>
        <position position="215"/>
    </location>
</feature>
<feature type="mutagenesis site" description="Loss of activity." evidence="10 12">
    <original>S</original>
    <variation>A</variation>
    <variation>E</variation>
    <location>
        <position position="219"/>
    </location>
</feature>
<feature type="mutagenesis site" description="Loss of kinase activity." evidence="10 12">
    <original>S</original>
    <variation>A</variation>
    <location>
        <position position="219"/>
    </location>
</feature>
<dbReference type="EC" id="2.7.11.1"/>
<dbReference type="EC" id="2.7.11.26"/>
<dbReference type="EMBL" id="Z83868">
    <property type="protein sequence ID" value="CAB06294.1"/>
    <property type="molecule type" value="mRNA"/>
</dbReference>
<dbReference type="RefSeq" id="NP_446399.1">
    <property type="nucleotide sequence ID" value="NM_053947.2"/>
</dbReference>
<dbReference type="SMR" id="O08678"/>
<dbReference type="BioGRID" id="250617">
    <property type="interactions" value="1"/>
</dbReference>
<dbReference type="FunCoup" id="O08678">
    <property type="interactions" value="2927"/>
</dbReference>
<dbReference type="STRING" id="10116.ENSRNOP00000003198"/>
<dbReference type="iPTMnet" id="O08678"/>
<dbReference type="PhosphoSitePlus" id="O08678"/>
<dbReference type="PaxDb" id="10116-ENSRNOP00000003198"/>
<dbReference type="GeneID" id="117016"/>
<dbReference type="KEGG" id="rno:117016"/>
<dbReference type="UCSC" id="RGD:619882">
    <property type="organism name" value="rat"/>
</dbReference>
<dbReference type="AGR" id="RGD:619882"/>
<dbReference type="CTD" id="4139"/>
<dbReference type="RGD" id="619882">
    <property type="gene designation" value="Mark1"/>
</dbReference>
<dbReference type="VEuPathDB" id="HostDB:ENSRNOG00000002339"/>
<dbReference type="eggNOG" id="KOG0586">
    <property type="taxonomic scope" value="Eukaryota"/>
</dbReference>
<dbReference type="HOGENOM" id="CLU_000288_157_5_1"/>
<dbReference type="InParanoid" id="O08678"/>
<dbReference type="PhylomeDB" id="O08678"/>
<dbReference type="PRO" id="PR:O08678"/>
<dbReference type="Proteomes" id="UP000002494">
    <property type="component" value="Chromosome 13"/>
</dbReference>
<dbReference type="Bgee" id="ENSRNOG00000002339">
    <property type="expression patterns" value="Expressed in frontal cortex and 20 other cell types or tissues"/>
</dbReference>
<dbReference type="ExpressionAtlas" id="O08678">
    <property type="expression patterns" value="baseline and differential"/>
</dbReference>
<dbReference type="GO" id="GO:0005737">
    <property type="term" value="C:cytoplasm"/>
    <property type="evidence" value="ECO:0000314"/>
    <property type="project" value="UniProtKB"/>
</dbReference>
<dbReference type="GO" id="GO:0005856">
    <property type="term" value="C:cytoskeleton"/>
    <property type="evidence" value="ECO:0000314"/>
    <property type="project" value="UniProtKB"/>
</dbReference>
<dbReference type="GO" id="GO:0030425">
    <property type="term" value="C:dendrite"/>
    <property type="evidence" value="ECO:0000250"/>
    <property type="project" value="UniProtKB"/>
</dbReference>
<dbReference type="GO" id="GO:0098978">
    <property type="term" value="C:glutamatergic synapse"/>
    <property type="evidence" value="ECO:0000266"/>
    <property type="project" value="RGD"/>
</dbReference>
<dbReference type="GO" id="GO:0005886">
    <property type="term" value="C:plasma membrane"/>
    <property type="evidence" value="ECO:0000250"/>
    <property type="project" value="UniProtKB"/>
</dbReference>
<dbReference type="GO" id="GO:0098794">
    <property type="term" value="C:postsynapse"/>
    <property type="evidence" value="ECO:0000266"/>
    <property type="project" value="RGD"/>
</dbReference>
<dbReference type="GO" id="GO:0005524">
    <property type="term" value="F:ATP binding"/>
    <property type="evidence" value="ECO:0000314"/>
    <property type="project" value="UniProtKB"/>
</dbReference>
<dbReference type="GO" id="GO:0000287">
    <property type="term" value="F:magnesium ion binding"/>
    <property type="evidence" value="ECO:0000314"/>
    <property type="project" value="UniProtKB"/>
</dbReference>
<dbReference type="GO" id="GO:0070300">
    <property type="term" value="F:phosphatidic acid binding"/>
    <property type="evidence" value="ECO:0000250"/>
    <property type="project" value="UniProtKB"/>
</dbReference>
<dbReference type="GO" id="GO:0005546">
    <property type="term" value="F:phosphatidylinositol-4,5-bisphosphate binding"/>
    <property type="evidence" value="ECO:0000250"/>
    <property type="project" value="UniProtKB"/>
</dbReference>
<dbReference type="GO" id="GO:0001786">
    <property type="term" value="F:phosphatidylserine binding"/>
    <property type="evidence" value="ECO:0000250"/>
    <property type="project" value="UniProtKB"/>
</dbReference>
<dbReference type="GO" id="GO:0004672">
    <property type="term" value="F:protein kinase activity"/>
    <property type="evidence" value="ECO:0000314"/>
    <property type="project" value="RGD"/>
</dbReference>
<dbReference type="GO" id="GO:0106310">
    <property type="term" value="F:protein serine kinase activity"/>
    <property type="evidence" value="ECO:0007669"/>
    <property type="project" value="RHEA"/>
</dbReference>
<dbReference type="GO" id="GO:0004674">
    <property type="term" value="F:protein serine/threonine kinase activity"/>
    <property type="evidence" value="ECO:0000314"/>
    <property type="project" value="UniProtKB"/>
</dbReference>
<dbReference type="GO" id="GO:0050321">
    <property type="term" value="F:tau-protein kinase activity"/>
    <property type="evidence" value="ECO:0000314"/>
    <property type="project" value="UniProtKB"/>
</dbReference>
<dbReference type="GO" id="GO:0007010">
    <property type="term" value="P:cytoskeleton organization"/>
    <property type="evidence" value="ECO:0000314"/>
    <property type="project" value="UniProtKB"/>
</dbReference>
<dbReference type="GO" id="GO:0051654">
    <property type="term" value="P:establishment of mitochondrion localization"/>
    <property type="evidence" value="ECO:0000266"/>
    <property type="project" value="RGD"/>
</dbReference>
<dbReference type="GO" id="GO:0035556">
    <property type="term" value="P:intracellular signal transduction"/>
    <property type="evidence" value="ECO:0000314"/>
    <property type="project" value="UniProtKB"/>
</dbReference>
<dbReference type="GO" id="GO:0000226">
    <property type="term" value="P:microtubule cytoskeleton organization"/>
    <property type="evidence" value="ECO:0000315"/>
    <property type="project" value="ARUK-UCL"/>
</dbReference>
<dbReference type="GO" id="GO:0010719">
    <property type="term" value="P:negative regulation of epithelial to mesenchymal transition"/>
    <property type="evidence" value="ECO:0000266"/>
    <property type="project" value="RGD"/>
</dbReference>
<dbReference type="GO" id="GO:0010629">
    <property type="term" value="P:negative regulation of gene expression"/>
    <property type="evidence" value="ECO:0000266"/>
    <property type="project" value="RGD"/>
</dbReference>
<dbReference type="GO" id="GO:0001764">
    <property type="term" value="P:neuron migration"/>
    <property type="evidence" value="ECO:0000314"/>
    <property type="project" value="UniProtKB"/>
</dbReference>
<dbReference type="GO" id="GO:0010628">
    <property type="term" value="P:positive regulation of gene expression"/>
    <property type="evidence" value="ECO:0000266"/>
    <property type="project" value="RGD"/>
</dbReference>
<dbReference type="GO" id="GO:0006468">
    <property type="term" value="P:protein phosphorylation"/>
    <property type="evidence" value="ECO:0000314"/>
    <property type="project" value="UniProtKB"/>
</dbReference>
<dbReference type="GO" id="GO:0050773">
    <property type="term" value="P:regulation of dendrite development"/>
    <property type="evidence" value="ECO:0000266"/>
    <property type="project" value="RGD"/>
</dbReference>
<dbReference type="GO" id="GO:0010975">
    <property type="term" value="P:regulation of neuron projection development"/>
    <property type="evidence" value="ECO:0000266"/>
    <property type="project" value="RGD"/>
</dbReference>
<dbReference type="GO" id="GO:0150052">
    <property type="term" value="P:regulation of postsynapse assembly"/>
    <property type="evidence" value="ECO:0000266"/>
    <property type="project" value="RGD"/>
</dbReference>
<dbReference type="GO" id="GO:0016055">
    <property type="term" value="P:Wnt signaling pathway"/>
    <property type="evidence" value="ECO:0007669"/>
    <property type="project" value="UniProtKB-KW"/>
</dbReference>
<dbReference type="CDD" id="cd12196">
    <property type="entry name" value="MARK1-3_C"/>
    <property type="match status" value="1"/>
</dbReference>
<dbReference type="CDD" id="cd14072">
    <property type="entry name" value="STKc_MARK"/>
    <property type="match status" value="1"/>
</dbReference>
<dbReference type="CDD" id="cd14405">
    <property type="entry name" value="UBA_MARK1"/>
    <property type="match status" value="1"/>
</dbReference>
<dbReference type="FunFam" id="1.10.510.10:FF:001032">
    <property type="entry name" value="KP78b, isoform A"/>
    <property type="match status" value="1"/>
</dbReference>
<dbReference type="FunFam" id="1.10.8.10:FF:000011">
    <property type="entry name" value="Non-specific serine/threonine protein kinase"/>
    <property type="match status" value="1"/>
</dbReference>
<dbReference type="FunFam" id="3.30.200.20:FF:000003">
    <property type="entry name" value="Non-specific serine/threonine protein kinase"/>
    <property type="match status" value="1"/>
</dbReference>
<dbReference type="FunFam" id="3.30.310.80:FF:000001">
    <property type="entry name" value="Non-specific serine/threonine protein kinase"/>
    <property type="match status" value="1"/>
</dbReference>
<dbReference type="Gene3D" id="1.10.8.10">
    <property type="entry name" value="DNA helicase RuvA subunit, C-terminal domain"/>
    <property type="match status" value="1"/>
</dbReference>
<dbReference type="Gene3D" id="3.30.310.80">
    <property type="entry name" value="Kinase associated domain 1, KA1"/>
    <property type="match status" value="1"/>
</dbReference>
<dbReference type="Gene3D" id="3.30.200.20">
    <property type="entry name" value="Phosphorylase Kinase, domain 1"/>
    <property type="match status" value="1"/>
</dbReference>
<dbReference type="Gene3D" id="1.10.510.10">
    <property type="entry name" value="Transferase(Phosphotransferase) domain 1"/>
    <property type="match status" value="1"/>
</dbReference>
<dbReference type="InterPro" id="IPR028375">
    <property type="entry name" value="KA1/Ssp2_C"/>
</dbReference>
<dbReference type="InterPro" id="IPR001772">
    <property type="entry name" value="KA1_dom"/>
</dbReference>
<dbReference type="InterPro" id="IPR011009">
    <property type="entry name" value="Kinase-like_dom_sf"/>
</dbReference>
<dbReference type="InterPro" id="IPR049508">
    <property type="entry name" value="MARK1-4_cat"/>
</dbReference>
<dbReference type="InterPro" id="IPR000719">
    <property type="entry name" value="Prot_kinase_dom"/>
</dbReference>
<dbReference type="InterPro" id="IPR017441">
    <property type="entry name" value="Protein_kinase_ATP_BS"/>
</dbReference>
<dbReference type="InterPro" id="IPR008271">
    <property type="entry name" value="Ser/Thr_kinase_AS"/>
</dbReference>
<dbReference type="InterPro" id="IPR015940">
    <property type="entry name" value="UBA"/>
</dbReference>
<dbReference type="PANTHER" id="PTHR24346">
    <property type="entry name" value="MAP/MICROTUBULE AFFINITY-REGULATING KINASE"/>
    <property type="match status" value="1"/>
</dbReference>
<dbReference type="PANTHER" id="PTHR24346:SF21">
    <property type="entry name" value="SERINE_THREONINE-PROTEIN KINASE MARK1"/>
    <property type="match status" value="1"/>
</dbReference>
<dbReference type="Pfam" id="PF02149">
    <property type="entry name" value="KA1"/>
    <property type="match status" value="1"/>
</dbReference>
<dbReference type="Pfam" id="PF00069">
    <property type="entry name" value="Pkinase"/>
    <property type="match status" value="1"/>
</dbReference>
<dbReference type="Pfam" id="PF00627">
    <property type="entry name" value="UBA"/>
    <property type="match status" value="1"/>
</dbReference>
<dbReference type="SMART" id="SM00220">
    <property type="entry name" value="S_TKc"/>
    <property type="match status" value="1"/>
</dbReference>
<dbReference type="SMART" id="SM00165">
    <property type="entry name" value="UBA"/>
    <property type="match status" value="1"/>
</dbReference>
<dbReference type="SUPFAM" id="SSF103243">
    <property type="entry name" value="KA1-like"/>
    <property type="match status" value="1"/>
</dbReference>
<dbReference type="SUPFAM" id="SSF56112">
    <property type="entry name" value="Protein kinase-like (PK-like)"/>
    <property type="match status" value="1"/>
</dbReference>
<dbReference type="PROSITE" id="PS50032">
    <property type="entry name" value="KA1"/>
    <property type="match status" value="1"/>
</dbReference>
<dbReference type="PROSITE" id="PS00107">
    <property type="entry name" value="PROTEIN_KINASE_ATP"/>
    <property type="match status" value="1"/>
</dbReference>
<dbReference type="PROSITE" id="PS50011">
    <property type="entry name" value="PROTEIN_KINASE_DOM"/>
    <property type="match status" value="1"/>
</dbReference>
<dbReference type="PROSITE" id="PS00108">
    <property type="entry name" value="PROTEIN_KINASE_ST"/>
    <property type="match status" value="1"/>
</dbReference>
<dbReference type="PROSITE" id="PS50030">
    <property type="entry name" value="UBA"/>
    <property type="match status" value="1"/>
</dbReference>